<sequence length="176" mass="18985">MTTIVSVRRNGHVVIAGDGQATLGNTVMKGNVKKVRRLYNDKVIAGFAGGTADAFTLFELFERKLEMHQGHLVKAAVELAKDWRTDRMLRKLEALLAVADETASLIITGNGDVVQPENDLIAIGSGGPYAQAAARALLENTELGAREIAEKALDIAGDICIYTNHFHTIEELTAKA</sequence>
<dbReference type="EC" id="3.4.25.2" evidence="1"/>
<dbReference type="EMBL" id="CP001120">
    <property type="protein sequence ID" value="ACF67183.1"/>
    <property type="molecule type" value="Genomic_DNA"/>
</dbReference>
<dbReference type="RefSeq" id="WP_000208240.1">
    <property type="nucleotide sequence ID" value="NC_011083.1"/>
</dbReference>
<dbReference type="SMR" id="B4TCM9"/>
<dbReference type="MEROPS" id="T01.006"/>
<dbReference type="KEGG" id="seh:SeHA_C4424"/>
<dbReference type="HOGENOM" id="CLU_093872_1_0_6"/>
<dbReference type="Proteomes" id="UP000001866">
    <property type="component" value="Chromosome"/>
</dbReference>
<dbReference type="GO" id="GO:0009376">
    <property type="term" value="C:HslUV protease complex"/>
    <property type="evidence" value="ECO:0007669"/>
    <property type="project" value="UniProtKB-UniRule"/>
</dbReference>
<dbReference type="GO" id="GO:0005839">
    <property type="term" value="C:proteasome core complex"/>
    <property type="evidence" value="ECO:0007669"/>
    <property type="project" value="InterPro"/>
</dbReference>
<dbReference type="GO" id="GO:0046872">
    <property type="term" value="F:metal ion binding"/>
    <property type="evidence" value="ECO:0007669"/>
    <property type="project" value="UniProtKB-KW"/>
</dbReference>
<dbReference type="GO" id="GO:0004298">
    <property type="term" value="F:threonine-type endopeptidase activity"/>
    <property type="evidence" value="ECO:0007669"/>
    <property type="project" value="UniProtKB-KW"/>
</dbReference>
<dbReference type="GO" id="GO:0051603">
    <property type="term" value="P:proteolysis involved in protein catabolic process"/>
    <property type="evidence" value="ECO:0007669"/>
    <property type="project" value="InterPro"/>
</dbReference>
<dbReference type="CDD" id="cd01913">
    <property type="entry name" value="protease_HslV"/>
    <property type="match status" value="1"/>
</dbReference>
<dbReference type="FunFam" id="3.60.20.10:FF:000002">
    <property type="entry name" value="ATP-dependent protease subunit HslV"/>
    <property type="match status" value="1"/>
</dbReference>
<dbReference type="Gene3D" id="3.60.20.10">
    <property type="entry name" value="Glutamine Phosphoribosylpyrophosphate, subunit 1, domain 1"/>
    <property type="match status" value="1"/>
</dbReference>
<dbReference type="HAMAP" id="MF_00248">
    <property type="entry name" value="HslV"/>
    <property type="match status" value="1"/>
</dbReference>
<dbReference type="InterPro" id="IPR022281">
    <property type="entry name" value="ATP-dep_Prtase_HsIV_su"/>
</dbReference>
<dbReference type="InterPro" id="IPR029055">
    <property type="entry name" value="Ntn_hydrolases_N"/>
</dbReference>
<dbReference type="InterPro" id="IPR001353">
    <property type="entry name" value="Proteasome_sua/b"/>
</dbReference>
<dbReference type="InterPro" id="IPR023333">
    <property type="entry name" value="Proteasome_suB-type"/>
</dbReference>
<dbReference type="NCBIfam" id="TIGR03692">
    <property type="entry name" value="ATP_dep_HslV"/>
    <property type="match status" value="1"/>
</dbReference>
<dbReference type="NCBIfam" id="NF003964">
    <property type="entry name" value="PRK05456.1"/>
    <property type="match status" value="1"/>
</dbReference>
<dbReference type="PANTHER" id="PTHR32194:SF0">
    <property type="entry name" value="ATP-DEPENDENT PROTEASE SUBUNIT HSLV"/>
    <property type="match status" value="1"/>
</dbReference>
<dbReference type="PANTHER" id="PTHR32194">
    <property type="entry name" value="METALLOPROTEASE TLDD"/>
    <property type="match status" value="1"/>
</dbReference>
<dbReference type="Pfam" id="PF00227">
    <property type="entry name" value="Proteasome"/>
    <property type="match status" value="1"/>
</dbReference>
<dbReference type="PIRSF" id="PIRSF039093">
    <property type="entry name" value="HslV"/>
    <property type="match status" value="1"/>
</dbReference>
<dbReference type="SUPFAM" id="SSF56235">
    <property type="entry name" value="N-terminal nucleophile aminohydrolases (Ntn hydrolases)"/>
    <property type="match status" value="1"/>
</dbReference>
<dbReference type="PROSITE" id="PS51476">
    <property type="entry name" value="PROTEASOME_BETA_2"/>
    <property type="match status" value="1"/>
</dbReference>
<name>HSLV_SALHS</name>
<protein>
    <recommendedName>
        <fullName evidence="1">ATP-dependent protease subunit HslV</fullName>
        <ecNumber evidence="1">3.4.25.2</ecNumber>
    </recommendedName>
    <alternativeName>
        <fullName evidence="1">Heat shock protein HslV</fullName>
    </alternativeName>
</protein>
<proteinExistence type="inferred from homology"/>
<accession>B4TCM9</accession>
<reference key="1">
    <citation type="journal article" date="2011" name="J. Bacteriol.">
        <title>Comparative genomics of 28 Salmonella enterica isolates: evidence for CRISPR-mediated adaptive sublineage evolution.</title>
        <authorList>
            <person name="Fricke W.F."/>
            <person name="Mammel M.K."/>
            <person name="McDermott P.F."/>
            <person name="Tartera C."/>
            <person name="White D.G."/>
            <person name="Leclerc J.E."/>
            <person name="Ravel J."/>
            <person name="Cebula T.A."/>
        </authorList>
    </citation>
    <scope>NUCLEOTIDE SEQUENCE [LARGE SCALE GENOMIC DNA]</scope>
    <source>
        <strain>SL476</strain>
    </source>
</reference>
<feature type="chain" id="PRO_1000100912" description="ATP-dependent protease subunit HslV">
    <location>
        <begin position="1"/>
        <end position="176"/>
    </location>
</feature>
<feature type="active site" evidence="1">
    <location>
        <position position="2"/>
    </location>
</feature>
<feature type="binding site" evidence="1">
    <location>
        <position position="157"/>
    </location>
    <ligand>
        <name>Na(+)</name>
        <dbReference type="ChEBI" id="CHEBI:29101"/>
    </ligand>
</feature>
<feature type="binding site" evidence="1">
    <location>
        <position position="160"/>
    </location>
    <ligand>
        <name>Na(+)</name>
        <dbReference type="ChEBI" id="CHEBI:29101"/>
    </ligand>
</feature>
<feature type="binding site" evidence="1">
    <location>
        <position position="163"/>
    </location>
    <ligand>
        <name>Na(+)</name>
        <dbReference type="ChEBI" id="CHEBI:29101"/>
    </ligand>
</feature>
<comment type="function">
    <text evidence="1">Protease subunit of a proteasome-like degradation complex believed to be a general protein degrading machinery.</text>
</comment>
<comment type="catalytic activity">
    <reaction evidence="1">
        <text>ATP-dependent cleavage of peptide bonds with broad specificity.</text>
        <dbReference type="EC" id="3.4.25.2"/>
    </reaction>
</comment>
<comment type="activity regulation">
    <text evidence="1">Allosterically activated by HslU binding.</text>
</comment>
<comment type="subunit">
    <text evidence="1">A double ring-shaped homohexamer of HslV is capped on each side by a ring-shaped HslU homohexamer. The assembly of the HslU/HslV complex is dependent on binding of ATP.</text>
</comment>
<comment type="subcellular location">
    <subcellularLocation>
        <location evidence="1">Cytoplasm</location>
    </subcellularLocation>
</comment>
<comment type="induction">
    <text evidence="1">By heat shock.</text>
</comment>
<comment type="similarity">
    <text evidence="1">Belongs to the peptidase T1B family. HslV subfamily.</text>
</comment>
<evidence type="ECO:0000255" key="1">
    <source>
        <dbReference type="HAMAP-Rule" id="MF_00248"/>
    </source>
</evidence>
<organism>
    <name type="scientific">Salmonella heidelberg (strain SL476)</name>
    <dbReference type="NCBI Taxonomy" id="454169"/>
    <lineage>
        <taxon>Bacteria</taxon>
        <taxon>Pseudomonadati</taxon>
        <taxon>Pseudomonadota</taxon>
        <taxon>Gammaproteobacteria</taxon>
        <taxon>Enterobacterales</taxon>
        <taxon>Enterobacteriaceae</taxon>
        <taxon>Salmonella</taxon>
    </lineage>
</organism>
<keyword id="KW-0021">Allosteric enzyme</keyword>
<keyword id="KW-0963">Cytoplasm</keyword>
<keyword id="KW-0378">Hydrolase</keyword>
<keyword id="KW-0479">Metal-binding</keyword>
<keyword id="KW-0645">Protease</keyword>
<keyword id="KW-0915">Sodium</keyword>
<keyword id="KW-0346">Stress response</keyword>
<keyword id="KW-0888">Threonine protease</keyword>
<gene>
    <name evidence="1" type="primary">hslV</name>
    <name type="ordered locus">SeHA_C4424</name>
</gene>